<comment type="function">
    <text evidence="1">Catalyzes the formation of 4-diphosphocytidyl-2-C-methyl-D-erythritol from CTP and 2-C-methyl-D-erythritol 4-phosphate (MEP).</text>
</comment>
<comment type="catalytic activity">
    <reaction evidence="1">
        <text>2-C-methyl-D-erythritol 4-phosphate + CTP + H(+) = 4-CDP-2-C-methyl-D-erythritol + diphosphate</text>
        <dbReference type="Rhea" id="RHEA:13429"/>
        <dbReference type="ChEBI" id="CHEBI:15378"/>
        <dbReference type="ChEBI" id="CHEBI:33019"/>
        <dbReference type="ChEBI" id="CHEBI:37563"/>
        <dbReference type="ChEBI" id="CHEBI:57823"/>
        <dbReference type="ChEBI" id="CHEBI:58262"/>
        <dbReference type="EC" id="2.7.7.60"/>
    </reaction>
</comment>
<comment type="pathway">
    <text evidence="1">Isoprenoid biosynthesis; isopentenyl diphosphate biosynthesis via DXP pathway; isopentenyl diphosphate from 1-deoxy-D-xylulose 5-phosphate: step 2/6.</text>
</comment>
<comment type="subunit">
    <text evidence="1">Homodimer.</text>
</comment>
<comment type="similarity">
    <text evidence="1">Belongs to the IspD/TarI cytidylyltransferase family. IspD subfamily.</text>
</comment>
<feature type="chain" id="PRO_1000094350" description="2-C-methyl-D-erythritol 4-phosphate cytidylyltransferase">
    <location>
        <begin position="1"/>
        <end position="236"/>
    </location>
</feature>
<feature type="site" description="Transition state stabilizer" evidence="1">
    <location>
        <position position="20"/>
    </location>
</feature>
<feature type="site" description="Transition state stabilizer" evidence="1">
    <location>
        <position position="27"/>
    </location>
</feature>
<feature type="site" description="Positions MEP for the nucleophilic attack" evidence="1">
    <location>
        <position position="157"/>
    </location>
</feature>
<feature type="site" description="Positions MEP for the nucleophilic attack" evidence="1">
    <location>
        <position position="213"/>
    </location>
</feature>
<gene>
    <name evidence="1" type="primary">ispD</name>
    <name type="ordered locus">SbBS512_E3127</name>
</gene>
<name>ISPD_SHIB3</name>
<protein>
    <recommendedName>
        <fullName evidence="1">2-C-methyl-D-erythritol 4-phosphate cytidylyltransferase</fullName>
        <ecNumber evidence="1">2.7.7.60</ecNumber>
    </recommendedName>
    <alternativeName>
        <fullName evidence="1">4-diphosphocytidyl-2C-methyl-D-erythritol synthase</fullName>
    </alternativeName>
    <alternativeName>
        <fullName evidence="1">MEP cytidylyltransferase</fullName>
        <shortName evidence="1">MCT</shortName>
    </alternativeName>
</protein>
<sequence length="236" mass="25737">MATTHLDVCAVVPAAGFGRRMQTECPKQYLSIGNQTILEHSVHALLAHPRVKRVVIAISPGDSRFAQLPLANHPQITVVDGGDERADSVLAGLKAAGDAQWVLVHDAARPCLHQDDLARLLALSETSRTGGILAAPVRDTMKRAEPGKNAIAHTVDRNGLWHALTPQFFPRELLHDCLTRALNEGATITDEASALEYCGFHPQLVEGRADNIKVTRPEDLALAEFYLTRTIHQENT</sequence>
<dbReference type="EC" id="2.7.7.60" evidence="1"/>
<dbReference type="EMBL" id="CP001063">
    <property type="protein sequence ID" value="ACD07250.1"/>
    <property type="molecule type" value="Genomic_DNA"/>
</dbReference>
<dbReference type="RefSeq" id="WP_000246138.1">
    <property type="nucleotide sequence ID" value="NC_010658.1"/>
</dbReference>
<dbReference type="SMR" id="B2TZI4"/>
<dbReference type="STRING" id="344609.SbBS512_E3127"/>
<dbReference type="GeneID" id="93779259"/>
<dbReference type="KEGG" id="sbc:SbBS512_E3127"/>
<dbReference type="HOGENOM" id="CLU_061281_3_1_6"/>
<dbReference type="UniPathway" id="UPA00056">
    <property type="reaction ID" value="UER00093"/>
</dbReference>
<dbReference type="Proteomes" id="UP000001030">
    <property type="component" value="Chromosome"/>
</dbReference>
<dbReference type="GO" id="GO:0050518">
    <property type="term" value="F:2-C-methyl-D-erythritol 4-phosphate cytidylyltransferase activity"/>
    <property type="evidence" value="ECO:0007669"/>
    <property type="project" value="UniProtKB-UniRule"/>
</dbReference>
<dbReference type="GO" id="GO:0019288">
    <property type="term" value="P:isopentenyl diphosphate biosynthetic process, methylerythritol 4-phosphate pathway"/>
    <property type="evidence" value="ECO:0007669"/>
    <property type="project" value="UniProtKB-UniRule"/>
</dbReference>
<dbReference type="CDD" id="cd02516">
    <property type="entry name" value="CDP-ME_synthetase"/>
    <property type="match status" value="1"/>
</dbReference>
<dbReference type="FunFam" id="3.90.550.10:FF:000003">
    <property type="entry name" value="2-C-methyl-D-erythritol 4-phosphate cytidylyltransferase"/>
    <property type="match status" value="1"/>
</dbReference>
<dbReference type="Gene3D" id="3.90.550.10">
    <property type="entry name" value="Spore Coat Polysaccharide Biosynthesis Protein SpsA, Chain A"/>
    <property type="match status" value="1"/>
</dbReference>
<dbReference type="HAMAP" id="MF_00108">
    <property type="entry name" value="IspD"/>
    <property type="match status" value="1"/>
</dbReference>
<dbReference type="InterPro" id="IPR001228">
    <property type="entry name" value="IspD"/>
</dbReference>
<dbReference type="InterPro" id="IPR034683">
    <property type="entry name" value="IspD/TarI"/>
</dbReference>
<dbReference type="InterPro" id="IPR050088">
    <property type="entry name" value="IspD/TarI_cytidylyltransf_bact"/>
</dbReference>
<dbReference type="InterPro" id="IPR018294">
    <property type="entry name" value="ISPD_synthase_CS"/>
</dbReference>
<dbReference type="InterPro" id="IPR029044">
    <property type="entry name" value="Nucleotide-diphossugar_trans"/>
</dbReference>
<dbReference type="NCBIfam" id="TIGR00453">
    <property type="entry name" value="ispD"/>
    <property type="match status" value="1"/>
</dbReference>
<dbReference type="PANTHER" id="PTHR32125">
    <property type="entry name" value="2-C-METHYL-D-ERYTHRITOL 4-PHOSPHATE CYTIDYLYLTRANSFERASE, CHLOROPLASTIC"/>
    <property type="match status" value="1"/>
</dbReference>
<dbReference type="PANTHER" id="PTHR32125:SF4">
    <property type="entry name" value="2-C-METHYL-D-ERYTHRITOL 4-PHOSPHATE CYTIDYLYLTRANSFERASE, CHLOROPLASTIC"/>
    <property type="match status" value="1"/>
</dbReference>
<dbReference type="Pfam" id="PF01128">
    <property type="entry name" value="IspD"/>
    <property type="match status" value="1"/>
</dbReference>
<dbReference type="SUPFAM" id="SSF53448">
    <property type="entry name" value="Nucleotide-diphospho-sugar transferases"/>
    <property type="match status" value="1"/>
</dbReference>
<dbReference type="PROSITE" id="PS01295">
    <property type="entry name" value="ISPD"/>
    <property type="match status" value="1"/>
</dbReference>
<organism>
    <name type="scientific">Shigella boydii serotype 18 (strain CDC 3083-94 / BS512)</name>
    <dbReference type="NCBI Taxonomy" id="344609"/>
    <lineage>
        <taxon>Bacteria</taxon>
        <taxon>Pseudomonadati</taxon>
        <taxon>Pseudomonadota</taxon>
        <taxon>Gammaproteobacteria</taxon>
        <taxon>Enterobacterales</taxon>
        <taxon>Enterobacteriaceae</taxon>
        <taxon>Shigella</taxon>
    </lineage>
</organism>
<proteinExistence type="inferred from homology"/>
<reference key="1">
    <citation type="submission" date="2008-05" db="EMBL/GenBank/DDBJ databases">
        <title>Complete sequence of Shigella boydii serotype 18 strain BS512.</title>
        <authorList>
            <person name="Rasko D.A."/>
            <person name="Rosovitz M."/>
            <person name="Maurelli A.T."/>
            <person name="Myers G."/>
            <person name="Seshadri R."/>
            <person name="Cer R."/>
            <person name="Jiang L."/>
            <person name="Ravel J."/>
            <person name="Sebastian Y."/>
        </authorList>
    </citation>
    <scope>NUCLEOTIDE SEQUENCE [LARGE SCALE GENOMIC DNA]</scope>
    <source>
        <strain>CDC 3083-94 / BS512</strain>
    </source>
</reference>
<keyword id="KW-0414">Isoprene biosynthesis</keyword>
<keyword id="KW-0548">Nucleotidyltransferase</keyword>
<keyword id="KW-1185">Reference proteome</keyword>
<keyword id="KW-0808">Transferase</keyword>
<evidence type="ECO:0000255" key="1">
    <source>
        <dbReference type="HAMAP-Rule" id="MF_00108"/>
    </source>
</evidence>
<accession>B2TZI4</accession>